<evidence type="ECO:0000250" key="1"/>
<evidence type="ECO:0000255" key="2">
    <source>
        <dbReference type="PROSITE-ProRule" id="PRU00253"/>
    </source>
</evidence>
<evidence type="ECO:0000305" key="3"/>
<reference key="1">
    <citation type="journal article" date="2001" name="Nature">
        <title>Genome sequence of enterohaemorrhagic Escherichia coli O157:H7.</title>
        <authorList>
            <person name="Perna N.T."/>
            <person name="Plunkett G. III"/>
            <person name="Burland V."/>
            <person name="Mau B."/>
            <person name="Glasner J.D."/>
            <person name="Rose D.J."/>
            <person name="Mayhew G.F."/>
            <person name="Evans P.S."/>
            <person name="Gregor J."/>
            <person name="Kirkpatrick H.A."/>
            <person name="Posfai G."/>
            <person name="Hackett J."/>
            <person name="Klink S."/>
            <person name="Boutin A."/>
            <person name="Shao Y."/>
            <person name="Miller L."/>
            <person name="Grotbeck E.J."/>
            <person name="Davis N.W."/>
            <person name="Lim A."/>
            <person name="Dimalanta E.T."/>
            <person name="Potamousis K."/>
            <person name="Apodaca J."/>
            <person name="Anantharaman T.S."/>
            <person name="Lin J."/>
            <person name="Yen G."/>
            <person name="Schwartz D.C."/>
            <person name="Welch R.A."/>
            <person name="Blattner F.R."/>
        </authorList>
    </citation>
    <scope>NUCLEOTIDE SEQUENCE [LARGE SCALE GENOMIC DNA]</scope>
    <source>
        <strain>O157:H7 / EDL933 / ATCC 700927 / EHEC</strain>
    </source>
</reference>
<reference key="2">
    <citation type="journal article" date="2001" name="DNA Res.">
        <title>Complete genome sequence of enterohemorrhagic Escherichia coli O157:H7 and genomic comparison with a laboratory strain K-12.</title>
        <authorList>
            <person name="Hayashi T."/>
            <person name="Makino K."/>
            <person name="Ohnishi M."/>
            <person name="Kurokawa K."/>
            <person name="Ishii K."/>
            <person name="Yokoyama K."/>
            <person name="Han C.-G."/>
            <person name="Ohtsubo E."/>
            <person name="Nakayama K."/>
            <person name="Murata T."/>
            <person name="Tanaka M."/>
            <person name="Tobe T."/>
            <person name="Iida T."/>
            <person name="Takami H."/>
            <person name="Honda T."/>
            <person name="Sasakawa C."/>
            <person name="Ogasawara N."/>
            <person name="Yasunaga T."/>
            <person name="Kuhara S."/>
            <person name="Shiba T."/>
            <person name="Hattori M."/>
            <person name="Shinagawa H."/>
        </authorList>
    </citation>
    <scope>NUCLEOTIDE SEQUENCE [LARGE SCALE GENOMIC DNA]</scope>
    <source>
        <strain>O157:H7 / Sakai / RIMD 0509952 / EHEC</strain>
    </source>
</reference>
<gene>
    <name type="primary">tdcA</name>
    <name type="ordered locus">Z4470</name>
    <name type="ordered locus">ECs3998</name>
</gene>
<comment type="function">
    <text evidence="1">Transcriptional activator for the tdcABCDE operon.</text>
</comment>
<comment type="pathway">
    <text>Amino-acid degradation; L-threonine degradation via propanoate pathway [regulation].</text>
</comment>
<comment type="similarity">
    <text evidence="3">Belongs to the LysR transcriptional regulatory family.</text>
</comment>
<organism>
    <name type="scientific">Escherichia coli O157:H7</name>
    <dbReference type="NCBI Taxonomy" id="83334"/>
    <lineage>
        <taxon>Bacteria</taxon>
        <taxon>Pseudomonadati</taxon>
        <taxon>Pseudomonadota</taxon>
        <taxon>Gammaproteobacteria</taxon>
        <taxon>Enterobacterales</taxon>
        <taxon>Enterobacteriaceae</taxon>
        <taxon>Escherichia</taxon>
    </lineage>
</organism>
<sequence length="312" mass="34539">MSTILLPKTQHLVVFQEVIRSGSIGSAAKELGLTQPAVSKIINDIEDYFGVELVVRKNTGVTLTPAGQLLLSRSESITREMKNMVNEISGMSSEAVVEVSFGFPSLIGFTFMSGMINKFKEVFPKAQVSMYEAQLSSFLPAIRDGRLDFAIGTLSAEMKLQDLHVEPLFESEFVLVASKSRTCTGTTTLESLKNEQWVLPQTNMGYYSELLTTLQRNGISIENIVKTDSVVTIYNLVLNADFLTVIPCDMTSPFGSNQFITIPVEETLPVAQYAAVWSKNYRIKKAASVLVELAKEYSSYNGCRRRQLIEVG</sequence>
<feature type="chain" id="PRO_0000105758" description="HTH-type transcriptional regulator TdcA">
    <location>
        <begin position="1"/>
        <end position="312"/>
    </location>
</feature>
<feature type="domain" description="HTH lysR-type" evidence="2">
    <location>
        <begin position="7"/>
        <end position="64"/>
    </location>
</feature>
<feature type="DNA-binding region" description="H-T-H motif" evidence="2">
    <location>
        <begin position="24"/>
        <end position="43"/>
    </location>
</feature>
<dbReference type="EMBL" id="AE005174">
    <property type="protein sequence ID" value="AAG58249.1"/>
    <property type="molecule type" value="Genomic_DNA"/>
</dbReference>
<dbReference type="EMBL" id="BA000007">
    <property type="protein sequence ID" value="BAB37421.1"/>
    <property type="molecule type" value="Genomic_DNA"/>
</dbReference>
<dbReference type="PIR" id="E85973">
    <property type="entry name" value="E85973"/>
</dbReference>
<dbReference type="PIR" id="F91128">
    <property type="entry name" value="F91128"/>
</dbReference>
<dbReference type="RefSeq" id="NP_312025.1">
    <property type="nucleotide sequence ID" value="NC_002695.1"/>
</dbReference>
<dbReference type="RefSeq" id="WP_000104211.1">
    <property type="nucleotide sequence ID" value="NZ_VOAI01000009.1"/>
</dbReference>
<dbReference type="SMR" id="P0ACQ8"/>
<dbReference type="STRING" id="155864.Z4470"/>
<dbReference type="GeneID" id="916165"/>
<dbReference type="GeneID" id="93778867"/>
<dbReference type="KEGG" id="ece:Z4470"/>
<dbReference type="KEGG" id="ecs:ECs_3998"/>
<dbReference type="PATRIC" id="fig|386585.9.peg.4172"/>
<dbReference type="eggNOG" id="COG0583">
    <property type="taxonomic scope" value="Bacteria"/>
</dbReference>
<dbReference type="HOGENOM" id="CLU_039613_6_0_6"/>
<dbReference type="OMA" id="PQTDMGY"/>
<dbReference type="UniPathway" id="UPA00052"/>
<dbReference type="Proteomes" id="UP000000558">
    <property type="component" value="Chromosome"/>
</dbReference>
<dbReference type="Proteomes" id="UP000002519">
    <property type="component" value="Chromosome"/>
</dbReference>
<dbReference type="GO" id="GO:0005829">
    <property type="term" value="C:cytosol"/>
    <property type="evidence" value="ECO:0007669"/>
    <property type="project" value="TreeGrafter"/>
</dbReference>
<dbReference type="GO" id="GO:0003677">
    <property type="term" value="F:DNA binding"/>
    <property type="evidence" value="ECO:0007669"/>
    <property type="project" value="UniProtKB-KW"/>
</dbReference>
<dbReference type="GO" id="GO:0003700">
    <property type="term" value="F:DNA-binding transcription factor activity"/>
    <property type="evidence" value="ECO:0007669"/>
    <property type="project" value="InterPro"/>
</dbReference>
<dbReference type="GO" id="GO:0070689">
    <property type="term" value="P:L-threonine catabolic process to propionate"/>
    <property type="evidence" value="ECO:0007669"/>
    <property type="project" value="UniProtKB-UniPathway"/>
</dbReference>
<dbReference type="CDD" id="cd08418">
    <property type="entry name" value="PBP2_TdcA"/>
    <property type="match status" value="1"/>
</dbReference>
<dbReference type="FunFam" id="1.10.10.10:FF:000230">
    <property type="entry name" value="HTH-type transcriptional regulator tdcA"/>
    <property type="match status" value="1"/>
</dbReference>
<dbReference type="FunFam" id="3.40.190.290:FF:000006">
    <property type="entry name" value="HTH-type transcriptional regulator tdcA"/>
    <property type="match status" value="1"/>
</dbReference>
<dbReference type="Gene3D" id="3.40.190.290">
    <property type="match status" value="1"/>
</dbReference>
<dbReference type="Gene3D" id="1.10.10.10">
    <property type="entry name" value="Winged helix-like DNA-binding domain superfamily/Winged helix DNA-binding domain"/>
    <property type="match status" value="1"/>
</dbReference>
<dbReference type="InterPro" id="IPR050950">
    <property type="entry name" value="HTH-type_LysR_regulators"/>
</dbReference>
<dbReference type="InterPro" id="IPR005119">
    <property type="entry name" value="LysR_subst-bd"/>
</dbReference>
<dbReference type="InterPro" id="IPR047993">
    <property type="entry name" value="TdcA/AbgR_PBP2"/>
</dbReference>
<dbReference type="InterPro" id="IPR000847">
    <property type="entry name" value="Tscrpt_reg_HTH_LysR"/>
</dbReference>
<dbReference type="InterPro" id="IPR036388">
    <property type="entry name" value="WH-like_DNA-bd_sf"/>
</dbReference>
<dbReference type="InterPro" id="IPR036390">
    <property type="entry name" value="WH_DNA-bd_sf"/>
</dbReference>
<dbReference type="NCBIfam" id="NF007667">
    <property type="entry name" value="PRK10341.1"/>
    <property type="match status" value="1"/>
</dbReference>
<dbReference type="PANTHER" id="PTHR30419:SF7">
    <property type="entry name" value="HTH-TYPE TRANSCRIPTIONAL REGULATOR TDCA"/>
    <property type="match status" value="1"/>
</dbReference>
<dbReference type="PANTHER" id="PTHR30419">
    <property type="entry name" value="HTH-TYPE TRANSCRIPTIONAL REGULATOR YBHD"/>
    <property type="match status" value="1"/>
</dbReference>
<dbReference type="Pfam" id="PF00126">
    <property type="entry name" value="HTH_1"/>
    <property type="match status" value="1"/>
</dbReference>
<dbReference type="Pfam" id="PF03466">
    <property type="entry name" value="LysR_substrate"/>
    <property type="match status" value="1"/>
</dbReference>
<dbReference type="PRINTS" id="PR00039">
    <property type="entry name" value="HTHLYSR"/>
</dbReference>
<dbReference type="SUPFAM" id="SSF53850">
    <property type="entry name" value="Periplasmic binding protein-like II"/>
    <property type="match status" value="1"/>
</dbReference>
<dbReference type="SUPFAM" id="SSF46785">
    <property type="entry name" value="Winged helix' DNA-binding domain"/>
    <property type="match status" value="1"/>
</dbReference>
<dbReference type="PROSITE" id="PS50931">
    <property type="entry name" value="HTH_LYSR"/>
    <property type="match status" value="1"/>
</dbReference>
<keyword id="KW-0010">Activator</keyword>
<keyword id="KW-0238">DNA-binding</keyword>
<keyword id="KW-1185">Reference proteome</keyword>
<keyword id="KW-0804">Transcription</keyword>
<keyword id="KW-0805">Transcription regulation</keyword>
<accession>P0ACQ8</accession>
<accession>P11036</accession>
<protein>
    <recommendedName>
        <fullName>HTH-type transcriptional regulator TdcA</fullName>
    </recommendedName>
    <alternativeName>
        <fullName>Tdc operon transcriptional activator</fullName>
    </alternativeName>
</protein>
<name>TDCA_ECO57</name>
<proteinExistence type="inferred from homology"/>